<keyword id="KW-0963">Cytoplasm</keyword>
<keyword id="KW-0274">FAD</keyword>
<keyword id="KW-0285">Flavoprotein</keyword>
<keyword id="KW-0520">NAD</keyword>
<keyword id="KW-1185">Reference proteome</keyword>
<keyword id="KW-0819">tRNA processing</keyword>
<reference key="1">
    <citation type="submission" date="2005-10" db="EMBL/GenBank/DDBJ databases">
        <title>Complete sequence of Pelobacter carbinolicus DSM 2380.</title>
        <authorList>
            <person name="Copeland A."/>
            <person name="Lucas S."/>
            <person name="Lapidus A."/>
            <person name="Barry K."/>
            <person name="Detter J.C."/>
            <person name="Glavina T."/>
            <person name="Hammon N."/>
            <person name="Israni S."/>
            <person name="Pitluck S."/>
            <person name="Chertkov O."/>
            <person name="Schmutz J."/>
            <person name="Larimer F."/>
            <person name="Land M."/>
            <person name="Kyrpides N."/>
            <person name="Ivanova N."/>
            <person name="Richardson P."/>
        </authorList>
    </citation>
    <scope>NUCLEOTIDE SEQUENCE [LARGE SCALE GENOMIC DNA]</scope>
    <source>
        <strain>DSM 2380 / NBRC 103641 / GraBd1</strain>
    </source>
</reference>
<comment type="function">
    <text evidence="1">NAD-binding protein involved in the addition of a carboxymethylaminomethyl (cmnm) group at the wobble position (U34) of certain tRNAs, forming tRNA-cmnm(5)s(2)U34.</text>
</comment>
<comment type="cofactor">
    <cofactor evidence="1">
        <name>FAD</name>
        <dbReference type="ChEBI" id="CHEBI:57692"/>
    </cofactor>
</comment>
<comment type="subunit">
    <text evidence="1">Homodimer. Heterotetramer of two MnmE and two MnmG subunits.</text>
</comment>
<comment type="subcellular location">
    <subcellularLocation>
        <location evidence="1">Cytoplasm</location>
    </subcellularLocation>
</comment>
<comment type="similarity">
    <text evidence="1">Belongs to the MnmG family.</text>
</comment>
<sequence length="619" mass="68445">MAEYGKDYEVIVVGAGHAGCEAALASARMGCNTLLLNLHLDAVAQMSCNPAIGGLAKGHLVREIDALGGEMARVIDATGIQFRTLNTKKGPAVRATRAQADRRAYQFHMKQVVENQPALDLKQGSVSRLILQGDKVSGVETTDGLRFFGQTVVLTTGTFMRGLIHVGLQHFPGGRAGEPPSLGLSDHLAELGLRVGRLKTGTPARLDGNTIDYDRLVPQHGDVPPKPFSADTEKITSPQVPCFITATNAHTHDIIRQGLDRSPLYQGVIEGVGPRYCPSIEDKIMRFPDKDSHHVFLEPEGLGTREVYPNGVSTSLPPDVQLAFLRTIPGLEHVEIMRPGYAIEYDFVDPIQLKPSLETKKIRNLFLAGQINGTSGYEEAAAQGLMAGINAVHALRDCPPVVLGRDQAYIGVMIDDLVTCGTSEPYRMFTSRAEYRLLLREDNADQRLTPLGHQVGLVSDERWQRFTRKMDKIVEGRDFLEKRRLSSSDKEAIGRLGLEDLKNGLSLVQILRRPDINIEDLVFCDDRLADIPENVREQLQIEIKYEGYIARQYEMVERFRRSEQIAIPSDMDYSPIEGLSIEVREKLQKVRPQNLGQAARIPGVTPAAVAILSVLLRRN</sequence>
<name>MNMG_SYNC1</name>
<accession>Q39ZT1</accession>
<feature type="chain" id="PRO_0000345311" description="tRNA uridine 5-carboxymethylaminomethyl modification enzyme MnmG">
    <location>
        <begin position="1"/>
        <end position="619"/>
    </location>
</feature>
<feature type="binding site" evidence="1">
    <location>
        <begin position="14"/>
        <end position="19"/>
    </location>
    <ligand>
        <name>FAD</name>
        <dbReference type="ChEBI" id="CHEBI:57692"/>
    </ligand>
</feature>
<feature type="binding site" evidence="1">
    <location>
        <position position="126"/>
    </location>
    <ligand>
        <name>FAD</name>
        <dbReference type="ChEBI" id="CHEBI:57692"/>
    </ligand>
</feature>
<feature type="binding site" evidence="1">
    <location>
        <position position="181"/>
    </location>
    <ligand>
        <name>FAD</name>
        <dbReference type="ChEBI" id="CHEBI:57692"/>
    </ligand>
</feature>
<feature type="binding site" evidence="1">
    <location>
        <begin position="273"/>
        <end position="287"/>
    </location>
    <ligand>
        <name>NAD(+)</name>
        <dbReference type="ChEBI" id="CHEBI:57540"/>
    </ligand>
</feature>
<feature type="binding site" evidence="1">
    <location>
        <position position="370"/>
    </location>
    <ligand>
        <name>FAD</name>
        <dbReference type="ChEBI" id="CHEBI:57692"/>
    </ligand>
</feature>
<evidence type="ECO:0000255" key="1">
    <source>
        <dbReference type="HAMAP-Rule" id="MF_00129"/>
    </source>
</evidence>
<gene>
    <name evidence="1" type="primary">mnmG</name>
    <name evidence="1" type="synonym">gidA</name>
    <name type="ordered locus">Pcar_3141</name>
</gene>
<dbReference type="EMBL" id="CP000142">
    <property type="protein sequence ID" value="ABA90376.1"/>
    <property type="molecule type" value="Genomic_DNA"/>
</dbReference>
<dbReference type="RefSeq" id="WP_011342932.1">
    <property type="nucleotide sequence ID" value="NC_007498.2"/>
</dbReference>
<dbReference type="SMR" id="Q39ZT1"/>
<dbReference type="STRING" id="338963.Pcar_3141"/>
<dbReference type="KEGG" id="pca:Pcar_3141"/>
<dbReference type="eggNOG" id="COG0445">
    <property type="taxonomic scope" value="Bacteria"/>
</dbReference>
<dbReference type="HOGENOM" id="CLU_007831_2_2_7"/>
<dbReference type="OrthoDB" id="9815560at2"/>
<dbReference type="Proteomes" id="UP000002534">
    <property type="component" value="Chromosome"/>
</dbReference>
<dbReference type="GO" id="GO:0005829">
    <property type="term" value="C:cytosol"/>
    <property type="evidence" value="ECO:0007669"/>
    <property type="project" value="TreeGrafter"/>
</dbReference>
<dbReference type="GO" id="GO:0050660">
    <property type="term" value="F:flavin adenine dinucleotide binding"/>
    <property type="evidence" value="ECO:0007669"/>
    <property type="project" value="UniProtKB-UniRule"/>
</dbReference>
<dbReference type="GO" id="GO:0030488">
    <property type="term" value="P:tRNA methylation"/>
    <property type="evidence" value="ECO:0007669"/>
    <property type="project" value="TreeGrafter"/>
</dbReference>
<dbReference type="GO" id="GO:0002098">
    <property type="term" value="P:tRNA wobble uridine modification"/>
    <property type="evidence" value="ECO:0007669"/>
    <property type="project" value="InterPro"/>
</dbReference>
<dbReference type="FunFam" id="1.10.150.570:FF:000001">
    <property type="entry name" value="tRNA uridine 5-carboxymethylaminomethyl modification enzyme MnmG"/>
    <property type="match status" value="1"/>
</dbReference>
<dbReference type="FunFam" id="3.50.50.60:FF:000002">
    <property type="entry name" value="tRNA uridine 5-carboxymethylaminomethyl modification enzyme MnmG"/>
    <property type="match status" value="1"/>
</dbReference>
<dbReference type="FunFam" id="3.50.50.60:FF:000010">
    <property type="entry name" value="tRNA uridine 5-carboxymethylaminomethyl modification enzyme MnmG"/>
    <property type="match status" value="1"/>
</dbReference>
<dbReference type="Gene3D" id="3.50.50.60">
    <property type="entry name" value="FAD/NAD(P)-binding domain"/>
    <property type="match status" value="2"/>
</dbReference>
<dbReference type="Gene3D" id="1.10.150.570">
    <property type="entry name" value="GidA associated domain, C-terminal subdomain"/>
    <property type="match status" value="1"/>
</dbReference>
<dbReference type="Gene3D" id="1.10.10.1800">
    <property type="entry name" value="tRNA uridine 5-carboxymethylaminomethyl modification enzyme MnmG/GidA"/>
    <property type="match status" value="1"/>
</dbReference>
<dbReference type="HAMAP" id="MF_00129">
    <property type="entry name" value="MnmG_GidA"/>
    <property type="match status" value="1"/>
</dbReference>
<dbReference type="InterPro" id="IPR036188">
    <property type="entry name" value="FAD/NAD-bd_sf"/>
</dbReference>
<dbReference type="InterPro" id="IPR049312">
    <property type="entry name" value="GIDA_C_N"/>
</dbReference>
<dbReference type="InterPro" id="IPR004416">
    <property type="entry name" value="MnmG"/>
</dbReference>
<dbReference type="InterPro" id="IPR002218">
    <property type="entry name" value="MnmG-rel"/>
</dbReference>
<dbReference type="InterPro" id="IPR020595">
    <property type="entry name" value="MnmG-rel_CS"/>
</dbReference>
<dbReference type="InterPro" id="IPR026904">
    <property type="entry name" value="MnmG_C"/>
</dbReference>
<dbReference type="InterPro" id="IPR047001">
    <property type="entry name" value="MnmG_C_subdom"/>
</dbReference>
<dbReference type="InterPro" id="IPR044920">
    <property type="entry name" value="MnmG_C_subdom_sf"/>
</dbReference>
<dbReference type="InterPro" id="IPR040131">
    <property type="entry name" value="MnmG_N"/>
</dbReference>
<dbReference type="NCBIfam" id="TIGR00136">
    <property type="entry name" value="mnmG_gidA"/>
    <property type="match status" value="1"/>
</dbReference>
<dbReference type="PANTHER" id="PTHR11806">
    <property type="entry name" value="GLUCOSE INHIBITED DIVISION PROTEIN A"/>
    <property type="match status" value="1"/>
</dbReference>
<dbReference type="PANTHER" id="PTHR11806:SF0">
    <property type="entry name" value="PROTEIN MTO1 HOMOLOG, MITOCHONDRIAL"/>
    <property type="match status" value="1"/>
</dbReference>
<dbReference type="Pfam" id="PF01134">
    <property type="entry name" value="GIDA"/>
    <property type="match status" value="1"/>
</dbReference>
<dbReference type="Pfam" id="PF21680">
    <property type="entry name" value="GIDA_C_1st"/>
    <property type="match status" value="1"/>
</dbReference>
<dbReference type="Pfam" id="PF13932">
    <property type="entry name" value="SAM_GIDA_C"/>
    <property type="match status" value="1"/>
</dbReference>
<dbReference type="SMART" id="SM01228">
    <property type="entry name" value="GIDA_assoc_3"/>
    <property type="match status" value="1"/>
</dbReference>
<dbReference type="SUPFAM" id="SSF51905">
    <property type="entry name" value="FAD/NAD(P)-binding domain"/>
    <property type="match status" value="1"/>
</dbReference>
<dbReference type="PROSITE" id="PS01280">
    <property type="entry name" value="GIDA_1"/>
    <property type="match status" value="1"/>
</dbReference>
<dbReference type="PROSITE" id="PS01281">
    <property type="entry name" value="GIDA_2"/>
    <property type="match status" value="1"/>
</dbReference>
<protein>
    <recommendedName>
        <fullName evidence="1">tRNA uridine 5-carboxymethylaminomethyl modification enzyme MnmG</fullName>
    </recommendedName>
    <alternativeName>
        <fullName evidence="1">Glucose-inhibited division protein A</fullName>
    </alternativeName>
</protein>
<organism>
    <name type="scientific">Syntrophotalea carbinolica (strain DSM 2380 / NBRC 103641 / GraBd1)</name>
    <name type="common">Pelobacter carbinolicus</name>
    <dbReference type="NCBI Taxonomy" id="338963"/>
    <lineage>
        <taxon>Bacteria</taxon>
        <taxon>Pseudomonadati</taxon>
        <taxon>Thermodesulfobacteriota</taxon>
        <taxon>Desulfuromonadia</taxon>
        <taxon>Desulfuromonadales</taxon>
        <taxon>Syntrophotaleaceae</taxon>
        <taxon>Syntrophotalea</taxon>
    </lineage>
</organism>
<proteinExistence type="inferred from homology"/>